<name>ARGB_RUTMC</name>
<sequence length="296" mass="31418">MLNNMSNNTNNITSVLTESLPYIKKFQGKTIVIKYGGNAMVDEALKSSFARDIVLMKLVGMNPIVVHGGGPQIGKTLKKIGKQSQFIDGMRVTDSETMDVVEMVLGGLVNKEIVNLIHQHGGHSIGLTGKDGSLISAKKLKHDIEPTSEIIDLGHVGEVDKIDISVINLLLKGDFIPVIAPIGVGKDGFSYNINADLVASAIAQALNAEKLILLTNASGLLDANGELLTRLDDNIIDGLIKDGTIHSGMLPKINCALSAVKNGVKSTHIIDGRVAHAVLLEVFTNSGVGTLITCNE</sequence>
<comment type="function">
    <text evidence="1">Catalyzes the ATP-dependent phosphorylation of N-acetyl-L-glutamate.</text>
</comment>
<comment type="catalytic activity">
    <reaction evidence="1">
        <text>N-acetyl-L-glutamate + ATP = N-acetyl-L-glutamyl 5-phosphate + ADP</text>
        <dbReference type="Rhea" id="RHEA:14629"/>
        <dbReference type="ChEBI" id="CHEBI:30616"/>
        <dbReference type="ChEBI" id="CHEBI:44337"/>
        <dbReference type="ChEBI" id="CHEBI:57936"/>
        <dbReference type="ChEBI" id="CHEBI:456216"/>
        <dbReference type="EC" id="2.7.2.8"/>
    </reaction>
</comment>
<comment type="pathway">
    <text evidence="1">Amino-acid biosynthesis; L-arginine biosynthesis; N(2)-acetyl-L-ornithine from L-glutamate: step 2/4.</text>
</comment>
<comment type="subcellular location">
    <subcellularLocation>
        <location evidence="1">Cytoplasm</location>
    </subcellularLocation>
</comment>
<comment type="similarity">
    <text evidence="1">Belongs to the acetylglutamate kinase family. ArgB subfamily.</text>
</comment>
<reference key="1">
    <citation type="journal article" date="2007" name="Science">
        <title>The Calyptogena magnifica chemoautotrophic symbiont genome.</title>
        <authorList>
            <person name="Newton I.L.G."/>
            <person name="Woyke T."/>
            <person name="Auchtung T.A."/>
            <person name="Dilly G.F."/>
            <person name="Dutton R.J."/>
            <person name="Fisher M.C."/>
            <person name="Fontanez K.M."/>
            <person name="Lau E."/>
            <person name="Stewart F.J."/>
            <person name="Richardson P.M."/>
            <person name="Barry K.W."/>
            <person name="Saunders E."/>
            <person name="Detter J.C."/>
            <person name="Wu D."/>
            <person name="Eisen J.A."/>
            <person name="Cavanaugh C.M."/>
        </authorList>
    </citation>
    <scope>NUCLEOTIDE SEQUENCE [LARGE SCALE GENOMIC DNA]</scope>
</reference>
<protein>
    <recommendedName>
        <fullName evidence="1">Acetylglutamate kinase</fullName>
        <ecNumber evidence="1">2.7.2.8</ecNumber>
    </recommendedName>
    <alternativeName>
        <fullName evidence="1">N-acetyl-L-glutamate 5-phosphotransferase</fullName>
    </alternativeName>
    <alternativeName>
        <fullName evidence="1">NAG kinase</fullName>
        <shortName evidence="1">NAGK</shortName>
    </alternativeName>
</protein>
<evidence type="ECO:0000255" key="1">
    <source>
        <dbReference type="HAMAP-Rule" id="MF_00082"/>
    </source>
</evidence>
<keyword id="KW-0028">Amino-acid biosynthesis</keyword>
<keyword id="KW-0055">Arginine biosynthesis</keyword>
<keyword id="KW-0067">ATP-binding</keyword>
<keyword id="KW-0963">Cytoplasm</keyword>
<keyword id="KW-0418">Kinase</keyword>
<keyword id="KW-0547">Nucleotide-binding</keyword>
<keyword id="KW-0808">Transferase</keyword>
<feature type="chain" id="PRO_0000335660" description="Acetylglutamate kinase">
    <location>
        <begin position="1"/>
        <end position="296"/>
    </location>
</feature>
<feature type="binding site" evidence="1">
    <location>
        <begin position="69"/>
        <end position="70"/>
    </location>
    <ligand>
        <name>substrate</name>
    </ligand>
</feature>
<feature type="binding site" evidence="1">
    <location>
        <position position="91"/>
    </location>
    <ligand>
        <name>substrate</name>
    </ligand>
</feature>
<feature type="binding site" evidence="1">
    <location>
        <position position="192"/>
    </location>
    <ligand>
        <name>substrate</name>
    </ligand>
</feature>
<feature type="site" description="Transition state stabilizer" evidence="1">
    <location>
        <position position="34"/>
    </location>
</feature>
<feature type="site" description="Transition state stabilizer" evidence="1">
    <location>
        <position position="252"/>
    </location>
</feature>
<proteinExistence type="inferred from homology"/>
<accession>A1AVQ7</accession>
<dbReference type="EC" id="2.7.2.8" evidence="1"/>
<dbReference type="EMBL" id="CP000488">
    <property type="protein sequence ID" value="ABL02014.1"/>
    <property type="molecule type" value="Genomic_DNA"/>
</dbReference>
<dbReference type="SMR" id="A1AVQ7"/>
<dbReference type="STRING" id="413404.Rmag_0232"/>
<dbReference type="KEGG" id="rma:Rmag_0232"/>
<dbReference type="eggNOG" id="COG0548">
    <property type="taxonomic scope" value="Bacteria"/>
</dbReference>
<dbReference type="HOGENOM" id="CLU_053680_0_0_6"/>
<dbReference type="UniPathway" id="UPA00068">
    <property type="reaction ID" value="UER00107"/>
</dbReference>
<dbReference type="Proteomes" id="UP000002587">
    <property type="component" value="Chromosome"/>
</dbReference>
<dbReference type="GO" id="GO:0005737">
    <property type="term" value="C:cytoplasm"/>
    <property type="evidence" value="ECO:0007669"/>
    <property type="project" value="UniProtKB-SubCell"/>
</dbReference>
<dbReference type="GO" id="GO:0003991">
    <property type="term" value="F:acetylglutamate kinase activity"/>
    <property type="evidence" value="ECO:0007669"/>
    <property type="project" value="UniProtKB-UniRule"/>
</dbReference>
<dbReference type="GO" id="GO:0005524">
    <property type="term" value="F:ATP binding"/>
    <property type="evidence" value="ECO:0007669"/>
    <property type="project" value="UniProtKB-UniRule"/>
</dbReference>
<dbReference type="GO" id="GO:0042450">
    <property type="term" value="P:arginine biosynthetic process via ornithine"/>
    <property type="evidence" value="ECO:0007669"/>
    <property type="project" value="UniProtKB-UniRule"/>
</dbReference>
<dbReference type="GO" id="GO:0006526">
    <property type="term" value="P:L-arginine biosynthetic process"/>
    <property type="evidence" value="ECO:0007669"/>
    <property type="project" value="UniProtKB-UniPathway"/>
</dbReference>
<dbReference type="CDD" id="cd04250">
    <property type="entry name" value="AAK_NAGK-C"/>
    <property type="match status" value="1"/>
</dbReference>
<dbReference type="FunFam" id="3.40.1160.10:FF:000004">
    <property type="entry name" value="Acetylglutamate kinase"/>
    <property type="match status" value="1"/>
</dbReference>
<dbReference type="Gene3D" id="3.40.1160.10">
    <property type="entry name" value="Acetylglutamate kinase-like"/>
    <property type="match status" value="1"/>
</dbReference>
<dbReference type="HAMAP" id="MF_00082">
    <property type="entry name" value="ArgB"/>
    <property type="match status" value="1"/>
</dbReference>
<dbReference type="InterPro" id="IPR036393">
    <property type="entry name" value="AceGlu_kinase-like_sf"/>
</dbReference>
<dbReference type="InterPro" id="IPR004662">
    <property type="entry name" value="AcgluKinase_fam"/>
</dbReference>
<dbReference type="InterPro" id="IPR037528">
    <property type="entry name" value="ArgB"/>
</dbReference>
<dbReference type="InterPro" id="IPR001048">
    <property type="entry name" value="Asp/Glu/Uridylate_kinase"/>
</dbReference>
<dbReference type="InterPro" id="IPR001057">
    <property type="entry name" value="Glu/AcGlu_kinase"/>
</dbReference>
<dbReference type="InterPro" id="IPR041727">
    <property type="entry name" value="NAGK-C"/>
</dbReference>
<dbReference type="NCBIfam" id="TIGR00761">
    <property type="entry name" value="argB"/>
    <property type="match status" value="1"/>
</dbReference>
<dbReference type="PANTHER" id="PTHR23342">
    <property type="entry name" value="N-ACETYLGLUTAMATE SYNTHASE"/>
    <property type="match status" value="1"/>
</dbReference>
<dbReference type="PANTHER" id="PTHR23342:SF0">
    <property type="entry name" value="N-ACETYLGLUTAMATE SYNTHASE, MITOCHONDRIAL"/>
    <property type="match status" value="1"/>
</dbReference>
<dbReference type="Pfam" id="PF00696">
    <property type="entry name" value="AA_kinase"/>
    <property type="match status" value="1"/>
</dbReference>
<dbReference type="PIRSF" id="PIRSF000728">
    <property type="entry name" value="NAGK"/>
    <property type="match status" value="1"/>
</dbReference>
<dbReference type="PRINTS" id="PR00474">
    <property type="entry name" value="GLU5KINASE"/>
</dbReference>
<dbReference type="SUPFAM" id="SSF53633">
    <property type="entry name" value="Carbamate kinase-like"/>
    <property type="match status" value="1"/>
</dbReference>
<organism>
    <name type="scientific">Ruthia magnifica subsp. Calyptogena magnifica</name>
    <dbReference type="NCBI Taxonomy" id="413404"/>
    <lineage>
        <taxon>Bacteria</taxon>
        <taxon>Pseudomonadati</taxon>
        <taxon>Pseudomonadota</taxon>
        <taxon>Gammaproteobacteria</taxon>
        <taxon>Candidatus Pseudothioglobaceae</taxon>
        <taxon>Candidatus Ruthturnera</taxon>
    </lineage>
</organism>
<gene>
    <name evidence="1" type="primary">argB</name>
    <name type="ordered locus">Rmag_0232</name>
</gene>